<dbReference type="EMBL" id="CP001230">
    <property type="protein sequence ID" value="ACO04188.1"/>
    <property type="molecule type" value="Genomic_DNA"/>
</dbReference>
<dbReference type="RefSeq" id="WP_012676426.1">
    <property type="nucleotide sequence ID" value="NC_012440.1"/>
</dbReference>
<dbReference type="SMR" id="C0QQC2"/>
<dbReference type="STRING" id="123214.PERMA_1082"/>
<dbReference type="PaxDb" id="123214-PERMA_1082"/>
<dbReference type="KEGG" id="pmx:PERMA_1082"/>
<dbReference type="eggNOG" id="COG0231">
    <property type="taxonomic scope" value="Bacteria"/>
</dbReference>
<dbReference type="HOGENOM" id="CLU_074944_0_1_0"/>
<dbReference type="OrthoDB" id="9801844at2"/>
<dbReference type="UniPathway" id="UPA00345"/>
<dbReference type="Proteomes" id="UP000001366">
    <property type="component" value="Chromosome"/>
</dbReference>
<dbReference type="GO" id="GO:0005737">
    <property type="term" value="C:cytoplasm"/>
    <property type="evidence" value="ECO:0007669"/>
    <property type="project" value="UniProtKB-SubCell"/>
</dbReference>
<dbReference type="GO" id="GO:0003746">
    <property type="term" value="F:translation elongation factor activity"/>
    <property type="evidence" value="ECO:0007669"/>
    <property type="project" value="UniProtKB-UniRule"/>
</dbReference>
<dbReference type="GO" id="GO:0043043">
    <property type="term" value="P:peptide biosynthetic process"/>
    <property type="evidence" value="ECO:0007669"/>
    <property type="project" value="InterPro"/>
</dbReference>
<dbReference type="CDD" id="cd04470">
    <property type="entry name" value="S1_EF-P_repeat_1"/>
    <property type="match status" value="1"/>
</dbReference>
<dbReference type="CDD" id="cd05794">
    <property type="entry name" value="S1_EF-P_repeat_2"/>
    <property type="match status" value="1"/>
</dbReference>
<dbReference type="FunFam" id="2.30.30.30:FF:000003">
    <property type="entry name" value="Elongation factor P"/>
    <property type="match status" value="1"/>
</dbReference>
<dbReference type="FunFam" id="2.40.50.140:FF:000004">
    <property type="entry name" value="Elongation factor P"/>
    <property type="match status" value="1"/>
</dbReference>
<dbReference type="FunFam" id="2.40.50.140:FF:000009">
    <property type="entry name" value="Elongation factor P"/>
    <property type="match status" value="1"/>
</dbReference>
<dbReference type="Gene3D" id="2.30.30.30">
    <property type="match status" value="1"/>
</dbReference>
<dbReference type="Gene3D" id="2.40.50.140">
    <property type="entry name" value="Nucleic acid-binding proteins"/>
    <property type="match status" value="2"/>
</dbReference>
<dbReference type="HAMAP" id="MF_00141">
    <property type="entry name" value="EF_P"/>
    <property type="match status" value="1"/>
</dbReference>
<dbReference type="InterPro" id="IPR015365">
    <property type="entry name" value="Elong-fact-P_C"/>
</dbReference>
<dbReference type="InterPro" id="IPR012340">
    <property type="entry name" value="NA-bd_OB-fold"/>
</dbReference>
<dbReference type="InterPro" id="IPR014722">
    <property type="entry name" value="Rib_uL2_dom2"/>
</dbReference>
<dbReference type="InterPro" id="IPR020599">
    <property type="entry name" value="Transl_elong_fac_P/YeiP"/>
</dbReference>
<dbReference type="InterPro" id="IPR013185">
    <property type="entry name" value="Transl_elong_KOW-like"/>
</dbReference>
<dbReference type="InterPro" id="IPR001059">
    <property type="entry name" value="Transl_elong_P/YeiP_cen"/>
</dbReference>
<dbReference type="InterPro" id="IPR013852">
    <property type="entry name" value="Transl_elong_P/YeiP_CS"/>
</dbReference>
<dbReference type="InterPro" id="IPR011768">
    <property type="entry name" value="Transl_elongation_fac_P"/>
</dbReference>
<dbReference type="InterPro" id="IPR008991">
    <property type="entry name" value="Translation_prot_SH3-like_sf"/>
</dbReference>
<dbReference type="NCBIfam" id="TIGR00038">
    <property type="entry name" value="efp"/>
    <property type="match status" value="1"/>
</dbReference>
<dbReference type="NCBIfam" id="NF001810">
    <property type="entry name" value="PRK00529.1"/>
    <property type="match status" value="1"/>
</dbReference>
<dbReference type="PANTHER" id="PTHR30053">
    <property type="entry name" value="ELONGATION FACTOR P"/>
    <property type="match status" value="1"/>
</dbReference>
<dbReference type="PANTHER" id="PTHR30053:SF12">
    <property type="entry name" value="ELONGATION FACTOR P (EF-P) FAMILY PROTEIN"/>
    <property type="match status" value="1"/>
</dbReference>
<dbReference type="Pfam" id="PF01132">
    <property type="entry name" value="EFP"/>
    <property type="match status" value="1"/>
</dbReference>
<dbReference type="Pfam" id="PF08207">
    <property type="entry name" value="EFP_N"/>
    <property type="match status" value="1"/>
</dbReference>
<dbReference type="Pfam" id="PF09285">
    <property type="entry name" value="Elong-fact-P_C"/>
    <property type="match status" value="1"/>
</dbReference>
<dbReference type="PIRSF" id="PIRSF005901">
    <property type="entry name" value="EF-P"/>
    <property type="match status" value="1"/>
</dbReference>
<dbReference type="SMART" id="SM01185">
    <property type="entry name" value="EFP"/>
    <property type="match status" value="1"/>
</dbReference>
<dbReference type="SMART" id="SM00841">
    <property type="entry name" value="Elong-fact-P_C"/>
    <property type="match status" value="1"/>
</dbReference>
<dbReference type="SUPFAM" id="SSF50249">
    <property type="entry name" value="Nucleic acid-binding proteins"/>
    <property type="match status" value="2"/>
</dbReference>
<dbReference type="SUPFAM" id="SSF50104">
    <property type="entry name" value="Translation proteins SH3-like domain"/>
    <property type="match status" value="1"/>
</dbReference>
<dbReference type="PROSITE" id="PS01275">
    <property type="entry name" value="EFP"/>
    <property type="match status" value="1"/>
</dbReference>
<protein>
    <recommendedName>
        <fullName evidence="1">Elongation factor P</fullName>
        <shortName evidence="1">EF-P</shortName>
    </recommendedName>
</protein>
<comment type="function">
    <text evidence="1">Involved in peptide bond synthesis. Stimulates efficient translation and peptide-bond synthesis on native or reconstituted 70S ribosomes in vitro. Probably functions indirectly by altering the affinity of the ribosome for aminoacyl-tRNA, thus increasing their reactivity as acceptors for peptidyl transferase.</text>
</comment>
<comment type="pathway">
    <text evidence="1">Protein biosynthesis; polypeptide chain elongation.</text>
</comment>
<comment type="subcellular location">
    <subcellularLocation>
        <location evidence="1">Cytoplasm</location>
    </subcellularLocation>
</comment>
<comment type="similarity">
    <text evidence="1">Belongs to the elongation factor P family.</text>
</comment>
<organism>
    <name type="scientific">Persephonella marina (strain DSM 14350 / EX-H1)</name>
    <dbReference type="NCBI Taxonomy" id="123214"/>
    <lineage>
        <taxon>Bacteria</taxon>
        <taxon>Pseudomonadati</taxon>
        <taxon>Aquificota</taxon>
        <taxon>Aquificia</taxon>
        <taxon>Aquificales</taxon>
        <taxon>Hydrogenothermaceae</taxon>
        <taxon>Persephonella</taxon>
    </lineage>
</organism>
<name>EFP_PERMH</name>
<reference key="1">
    <citation type="journal article" date="2009" name="J. Bacteriol.">
        <title>Complete and draft genome sequences of six members of the Aquificales.</title>
        <authorList>
            <person name="Reysenbach A.-L."/>
            <person name="Hamamura N."/>
            <person name="Podar M."/>
            <person name="Griffiths E."/>
            <person name="Ferreira S."/>
            <person name="Hochstein R."/>
            <person name="Heidelberg J."/>
            <person name="Johnson J."/>
            <person name="Mead D."/>
            <person name="Pohorille A."/>
            <person name="Sarmiento M."/>
            <person name="Schweighofer K."/>
            <person name="Seshadri R."/>
            <person name="Voytek M.A."/>
        </authorList>
    </citation>
    <scope>NUCLEOTIDE SEQUENCE [LARGE SCALE GENOMIC DNA]</scope>
    <source>
        <strain>DSM 14350 / EX-H1</strain>
    </source>
</reference>
<feature type="chain" id="PRO_1000123020" description="Elongation factor P">
    <location>
        <begin position="1"/>
        <end position="190"/>
    </location>
</feature>
<keyword id="KW-0963">Cytoplasm</keyword>
<keyword id="KW-0251">Elongation factor</keyword>
<keyword id="KW-0648">Protein biosynthesis</keyword>
<keyword id="KW-1185">Reference proteome</keyword>
<evidence type="ECO:0000255" key="1">
    <source>
        <dbReference type="HAMAP-Rule" id="MF_00141"/>
    </source>
</evidence>
<gene>
    <name evidence="1" type="primary">efp</name>
    <name type="ordered locus">PERMA_1082</name>
</gene>
<proteinExistence type="inferred from homology"/>
<accession>C0QQC2</accession>
<sequence length="190" mass="21274">MGVKIGINQIKKDMFIVHDGQPYRVLDYDHVKPGKGQAFVRVKAKNMKTGNVIEITYKSSESIELADFEQRQMSYSYFDGDSYWFIDMNTGDMIAVPASVLGDEAQFLKEGMEVFIFLDKGQPIGVELPKSAVYEVIETEPGFKGDTATSTLKPAKIDTGATVQVPLFINEGDKIKIDTRTGKYIERVNE</sequence>